<protein>
    <recommendedName>
        <fullName>Cytochrome b</fullName>
    </recommendedName>
    <alternativeName>
        <fullName>Complex III subunit 3</fullName>
    </alternativeName>
    <alternativeName>
        <fullName>Complex III subunit III</fullName>
    </alternativeName>
    <alternativeName>
        <fullName>Cytochrome b-c1 complex subunit 3</fullName>
    </alternativeName>
    <alternativeName>
        <fullName>Ubiquinol-cytochrome-c reductase complex cytochrome b subunit</fullName>
    </alternativeName>
</protein>
<comment type="function">
    <text evidence="2">Component of the ubiquinol-cytochrome c reductase complex (complex III or cytochrome b-c1 complex) that is part of the mitochondrial respiratory chain. The b-c1 complex mediates electron transfer from ubiquinol to cytochrome c. Contributes to the generation of a proton gradient across the mitochondrial membrane that is then used for ATP synthesis.</text>
</comment>
<comment type="cofactor">
    <cofactor evidence="2">
        <name>heme b</name>
        <dbReference type="ChEBI" id="CHEBI:60344"/>
    </cofactor>
    <text evidence="2">Binds 2 heme b groups non-covalently.</text>
</comment>
<comment type="subunit">
    <text evidence="2">The cytochrome bc1 complex contains 11 subunits: 3 respiratory subunits (MT-CYB, CYC1 and UQCRFS1), 2 core proteins (UQCRC1 and UQCRC2) and 6 low-molecular weight proteins (UQCRH/QCR6, UQCRB/QCR7, UQCRQ/QCR8, UQCR10/QCR9, UQCR11/QCR10 and a cleavage product of UQCRFS1). This cytochrome bc1 complex then forms a dimer.</text>
</comment>
<comment type="subcellular location">
    <subcellularLocation>
        <location evidence="2">Mitochondrion inner membrane</location>
        <topology evidence="2">Multi-pass membrane protein</topology>
    </subcellularLocation>
</comment>
<comment type="miscellaneous">
    <text evidence="1">Heme 1 (or BL or b562) is low-potential and absorbs at about 562 nm, and heme 2 (or BH or b566) is high-potential and absorbs at about 566 nm.</text>
</comment>
<comment type="similarity">
    <text evidence="3 4">Belongs to the cytochrome b family.</text>
</comment>
<comment type="caution">
    <text evidence="2">The full-length protein contains only eight transmembrane helices, not nine as predicted by bioinformatics tools.</text>
</comment>
<organism>
    <name type="scientific">Phyllotis amicus</name>
    <name type="common">Friendly leaf-eared mouse</name>
    <dbReference type="NCBI Taxonomy" id="59934"/>
    <lineage>
        <taxon>Eukaryota</taxon>
        <taxon>Metazoa</taxon>
        <taxon>Chordata</taxon>
        <taxon>Craniata</taxon>
        <taxon>Vertebrata</taxon>
        <taxon>Euteleostomi</taxon>
        <taxon>Mammalia</taxon>
        <taxon>Eutheria</taxon>
        <taxon>Euarchontoglires</taxon>
        <taxon>Glires</taxon>
        <taxon>Rodentia</taxon>
        <taxon>Myomorpha</taxon>
        <taxon>Muroidea</taxon>
        <taxon>Cricetidae</taxon>
        <taxon>Sigmodontinae</taxon>
        <taxon>Phyllotis</taxon>
    </lineage>
</organism>
<sequence>MTIMRKTHPLFKIINNSFIDLPTPSNISSWWNFGSLLGVCLIMQILTGLFLAMHYTSDTTTAFSSVAHICRDVNYGWLIRYMHANGASMFFICMFIHVGRGIYYGSYVLSETWNIGIILFLTTMATAFVGYVLPWGQMSFWGATVITNLLSAIPYIGTSLVEWIWGGFSVDKATLTRFFAFHFILPFIVTALVLVHLLFLHETGSNNPSGLDSNSDKIPFHPYYTIKDLLGVLLLLMVLMILVLFFPDILGDPDNYTPANPLNTPAHIKPEWYFLFAYAILRSIPNKLGGVLALILSILVLALFPLINSSKQHGLVYRPITQFIYWIFIANLLVLTWIGGQPVEYPFTVIGQISSIMYFSIIIIFMPIANMIENDILKLHY</sequence>
<reference key="1">
    <citation type="submission" date="2005-03" db="EMBL/GenBank/DDBJ databases">
        <title>A molecular reappraisal of the systematics of the leaf-eared mice Phyllotis and their relatives.</title>
        <authorList>
            <person name="Steppan S.J."/>
            <person name="Ramirez O."/>
            <person name="Banbury J."/>
            <person name="Huchon D."/>
            <person name="Pacheco V."/>
            <person name="Walker L.I."/>
            <person name="Spotorno A.E."/>
        </authorList>
    </citation>
    <scope>NUCLEOTIDE SEQUENCE [GENOMIC DNA]</scope>
</reference>
<proteinExistence type="inferred from homology"/>
<name>CYB_PHYAC</name>
<keyword id="KW-0249">Electron transport</keyword>
<keyword id="KW-0349">Heme</keyword>
<keyword id="KW-0408">Iron</keyword>
<keyword id="KW-0472">Membrane</keyword>
<keyword id="KW-0479">Metal-binding</keyword>
<keyword id="KW-0496">Mitochondrion</keyword>
<keyword id="KW-0999">Mitochondrion inner membrane</keyword>
<keyword id="KW-0679">Respiratory chain</keyword>
<keyword id="KW-0812">Transmembrane</keyword>
<keyword id="KW-1133">Transmembrane helix</keyword>
<keyword id="KW-0813">Transport</keyword>
<keyword id="KW-0830">Ubiquinone</keyword>
<feature type="chain" id="PRO_0000255120" description="Cytochrome b">
    <location>
        <begin position="1"/>
        <end position="381"/>
    </location>
</feature>
<feature type="transmembrane region" description="Helical" evidence="2">
    <location>
        <begin position="33"/>
        <end position="53"/>
    </location>
</feature>
<feature type="transmembrane region" description="Helical" evidence="2">
    <location>
        <begin position="77"/>
        <end position="98"/>
    </location>
</feature>
<feature type="transmembrane region" description="Helical" evidence="2">
    <location>
        <begin position="113"/>
        <end position="133"/>
    </location>
</feature>
<feature type="transmembrane region" description="Helical" evidence="2">
    <location>
        <begin position="178"/>
        <end position="198"/>
    </location>
</feature>
<feature type="transmembrane region" description="Helical" evidence="2">
    <location>
        <begin position="226"/>
        <end position="246"/>
    </location>
</feature>
<feature type="transmembrane region" description="Helical" evidence="2">
    <location>
        <begin position="288"/>
        <end position="308"/>
    </location>
</feature>
<feature type="transmembrane region" description="Helical" evidence="2">
    <location>
        <begin position="320"/>
        <end position="340"/>
    </location>
</feature>
<feature type="transmembrane region" description="Helical" evidence="2">
    <location>
        <begin position="347"/>
        <end position="367"/>
    </location>
</feature>
<feature type="binding site" description="axial binding residue" evidence="2">
    <location>
        <position position="83"/>
    </location>
    <ligand>
        <name>heme b</name>
        <dbReference type="ChEBI" id="CHEBI:60344"/>
        <label>b562</label>
    </ligand>
    <ligandPart>
        <name>Fe</name>
        <dbReference type="ChEBI" id="CHEBI:18248"/>
    </ligandPart>
</feature>
<feature type="binding site" description="axial binding residue" evidence="2">
    <location>
        <position position="97"/>
    </location>
    <ligand>
        <name>heme b</name>
        <dbReference type="ChEBI" id="CHEBI:60344"/>
        <label>b566</label>
    </ligand>
    <ligandPart>
        <name>Fe</name>
        <dbReference type="ChEBI" id="CHEBI:18248"/>
    </ligandPart>
</feature>
<feature type="binding site" description="axial binding residue" evidence="2">
    <location>
        <position position="182"/>
    </location>
    <ligand>
        <name>heme b</name>
        <dbReference type="ChEBI" id="CHEBI:60344"/>
        <label>b562</label>
    </ligand>
    <ligandPart>
        <name>Fe</name>
        <dbReference type="ChEBI" id="CHEBI:18248"/>
    </ligandPart>
</feature>
<feature type="binding site" description="axial binding residue" evidence="2">
    <location>
        <position position="196"/>
    </location>
    <ligand>
        <name>heme b</name>
        <dbReference type="ChEBI" id="CHEBI:60344"/>
        <label>b566</label>
    </ligand>
    <ligandPart>
        <name>Fe</name>
        <dbReference type="ChEBI" id="CHEBI:18248"/>
    </ligandPart>
</feature>
<feature type="binding site" evidence="2">
    <location>
        <position position="201"/>
    </location>
    <ligand>
        <name>a ubiquinone</name>
        <dbReference type="ChEBI" id="CHEBI:16389"/>
    </ligand>
</feature>
<gene>
    <name type="primary">MT-CYB</name>
    <name type="synonym">COB</name>
    <name type="synonym">CYTB</name>
    <name type="synonym">MTCYB</name>
</gene>
<dbReference type="EMBL" id="AY956708">
    <property type="protein sequence ID" value="AAY32822.1"/>
    <property type="molecule type" value="Genomic_DNA"/>
</dbReference>
<dbReference type="SMR" id="Q1XA32"/>
<dbReference type="GO" id="GO:0005743">
    <property type="term" value="C:mitochondrial inner membrane"/>
    <property type="evidence" value="ECO:0007669"/>
    <property type="project" value="UniProtKB-SubCell"/>
</dbReference>
<dbReference type="GO" id="GO:0045275">
    <property type="term" value="C:respiratory chain complex III"/>
    <property type="evidence" value="ECO:0007669"/>
    <property type="project" value="InterPro"/>
</dbReference>
<dbReference type="GO" id="GO:0046872">
    <property type="term" value="F:metal ion binding"/>
    <property type="evidence" value="ECO:0007669"/>
    <property type="project" value="UniProtKB-KW"/>
</dbReference>
<dbReference type="GO" id="GO:0008121">
    <property type="term" value="F:ubiquinol-cytochrome-c reductase activity"/>
    <property type="evidence" value="ECO:0007669"/>
    <property type="project" value="InterPro"/>
</dbReference>
<dbReference type="GO" id="GO:0006122">
    <property type="term" value="P:mitochondrial electron transport, ubiquinol to cytochrome c"/>
    <property type="evidence" value="ECO:0007669"/>
    <property type="project" value="TreeGrafter"/>
</dbReference>
<dbReference type="CDD" id="cd00290">
    <property type="entry name" value="cytochrome_b_C"/>
    <property type="match status" value="1"/>
</dbReference>
<dbReference type="CDD" id="cd00284">
    <property type="entry name" value="Cytochrome_b_N"/>
    <property type="match status" value="1"/>
</dbReference>
<dbReference type="FunFam" id="1.20.810.10:FF:000002">
    <property type="entry name" value="Cytochrome b"/>
    <property type="match status" value="1"/>
</dbReference>
<dbReference type="Gene3D" id="1.20.810.10">
    <property type="entry name" value="Cytochrome Bc1 Complex, Chain C"/>
    <property type="match status" value="1"/>
</dbReference>
<dbReference type="InterPro" id="IPR005798">
    <property type="entry name" value="Cyt_b/b6_C"/>
</dbReference>
<dbReference type="InterPro" id="IPR036150">
    <property type="entry name" value="Cyt_b/b6_C_sf"/>
</dbReference>
<dbReference type="InterPro" id="IPR005797">
    <property type="entry name" value="Cyt_b/b6_N"/>
</dbReference>
<dbReference type="InterPro" id="IPR027387">
    <property type="entry name" value="Cytb/b6-like_sf"/>
</dbReference>
<dbReference type="InterPro" id="IPR030689">
    <property type="entry name" value="Cytochrome_b"/>
</dbReference>
<dbReference type="InterPro" id="IPR048260">
    <property type="entry name" value="Cytochrome_b_C_euk/bac"/>
</dbReference>
<dbReference type="InterPro" id="IPR048259">
    <property type="entry name" value="Cytochrome_b_N_euk/bac"/>
</dbReference>
<dbReference type="InterPro" id="IPR016174">
    <property type="entry name" value="Di-haem_cyt_TM"/>
</dbReference>
<dbReference type="PANTHER" id="PTHR19271">
    <property type="entry name" value="CYTOCHROME B"/>
    <property type="match status" value="1"/>
</dbReference>
<dbReference type="PANTHER" id="PTHR19271:SF16">
    <property type="entry name" value="CYTOCHROME B"/>
    <property type="match status" value="1"/>
</dbReference>
<dbReference type="Pfam" id="PF00032">
    <property type="entry name" value="Cytochrom_B_C"/>
    <property type="match status" value="1"/>
</dbReference>
<dbReference type="Pfam" id="PF00033">
    <property type="entry name" value="Cytochrome_B"/>
    <property type="match status" value="1"/>
</dbReference>
<dbReference type="PIRSF" id="PIRSF038885">
    <property type="entry name" value="COB"/>
    <property type="match status" value="1"/>
</dbReference>
<dbReference type="SUPFAM" id="SSF81648">
    <property type="entry name" value="a domain/subunit of cytochrome bc1 complex (Ubiquinol-cytochrome c reductase)"/>
    <property type="match status" value="1"/>
</dbReference>
<dbReference type="SUPFAM" id="SSF81342">
    <property type="entry name" value="Transmembrane di-heme cytochromes"/>
    <property type="match status" value="1"/>
</dbReference>
<dbReference type="PROSITE" id="PS51003">
    <property type="entry name" value="CYTB_CTER"/>
    <property type="match status" value="1"/>
</dbReference>
<dbReference type="PROSITE" id="PS51002">
    <property type="entry name" value="CYTB_NTER"/>
    <property type="match status" value="1"/>
</dbReference>
<evidence type="ECO:0000250" key="1"/>
<evidence type="ECO:0000250" key="2">
    <source>
        <dbReference type="UniProtKB" id="P00157"/>
    </source>
</evidence>
<evidence type="ECO:0000255" key="3">
    <source>
        <dbReference type="PROSITE-ProRule" id="PRU00967"/>
    </source>
</evidence>
<evidence type="ECO:0000255" key="4">
    <source>
        <dbReference type="PROSITE-ProRule" id="PRU00968"/>
    </source>
</evidence>
<geneLocation type="mitochondrion"/>
<accession>Q1XA32</accession>